<feature type="chain" id="PRO_0000329029" description="XIAP-associated factor 1">
    <location>
        <begin position="1"/>
        <end position="273"/>
    </location>
</feature>
<feature type="zinc finger region" description="TRAF-type">
    <location>
        <begin position="22"/>
        <end position="80"/>
    </location>
</feature>
<feature type="region of interest" description="Disordered" evidence="2">
    <location>
        <begin position="181"/>
        <end position="228"/>
    </location>
</feature>
<feature type="splice variant" id="VSP_039715" description="In isoform 2." evidence="3">
    <location>
        <begin position="57"/>
        <end position="151"/>
    </location>
</feature>
<evidence type="ECO:0000250" key="1"/>
<evidence type="ECO:0000256" key="2">
    <source>
        <dbReference type="SAM" id="MobiDB-lite"/>
    </source>
</evidence>
<evidence type="ECO:0000305" key="3"/>
<dbReference type="EMBL" id="AL929071">
    <property type="protein sequence ID" value="CAI36033.2"/>
    <property type="molecule type" value="Genomic_DNA"/>
</dbReference>
<dbReference type="EMBL" id="AL929071">
    <property type="protein sequence ID" value="CAI36034.1"/>
    <property type="status" value="ALT_SEQ"/>
    <property type="molecule type" value="Genomic_DNA"/>
</dbReference>
<dbReference type="EMBL" id="AL929071">
    <property type="protein sequence ID" value="CAX15644.1"/>
    <property type="molecule type" value="Genomic_DNA"/>
</dbReference>
<dbReference type="EMBL" id="AK140315">
    <property type="protein sequence ID" value="BAE24328.1"/>
    <property type="status" value="ALT_SEQ"/>
    <property type="molecule type" value="mRNA"/>
</dbReference>
<dbReference type="CCDS" id="CCDS24984.2">
    <molecule id="Q5NBU8-1"/>
</dbReference>
<dbReference type="CCDS" id="CCDS70236.1">
    <molecule id="Q5NBU8-3"/>
</dbReference>
<dbReference type="RefSeq" id="NP_001032802.2">
    <molecule id="Q5NBU8-1"/>
    <property type="nucleotide sequence ID" value="NM_001037713.4"/>
</dbReference>
<dbReference type="RefSeq" id="NP_001278082.1">
    <molecule id="Q5NBU8-3"/>
    <property type="nucleotide sequence ID" value="NM_001291153.1"/>
</dbReference>
<dbReference type="BioGRID" id="236517">
    <property type="interactions" value="1"/>
</dbReference>
<dbReference type="FunCoup" id="Q5NBU8">
    <property type="interactions" value="1642"/>
</dbReference>
<dbReference type="STRING" id="10090.ENSMUSP00000123011"/>
<dbReference type="iPTMnet" id="Q5NBU8"/>
<dbReference type="PhosphoSitePlus" id="Q5NBU8"/>
<dbReference type="PaxDb" id="10090-ENSMUSP00000123011"/>
<dbReference type="PeptideAtlas" id="Q5NBU8"/>
<dbReference type="ProteomicsDB" id="297861">
    <molecule id="Q5NBU8-1"/>
</dbReference>
<dbReference type="ProteomicsDB" id="297862">
    <molecule id="Q5NBU8-3"/>
</dbReference>
<dbReference type="Pumba" id="Q5NBU8"/>
<dbReference type="Antibodypedia" id="23838">
    <property type="antibodies" value="246 antibodies from 31 providers"/>
</dbReference>
<dbReference type="DNASU" id="327959"/>
<dbReference type="Ensembl" id="ENSMUST00000140842.9">
    <molecule id="Q5NBU8-3"/>
    <property type="protein sequence ID" value="ENSMUSP00000121472.3"/>
    <property type="gene ID" value="ENSMUSG00000040483.16"/>
</dbReference>
<dbReference type="Ensembl" id="ENSMUST00000146233.8">
    <molecule id="Q5NBU8-1"/>
    <property type="protein sequence ID" value="ENSMUSP00000123011.2"/>
    <property type="gene ID" value="ENSMUSG00000040483.16"/>
</dbReference>
<dbReference type="GeneID" id="327959"/>
<dbReference type="KEGG" id="mmu:327959"/>
<dbReference type="UCSC" id="uc007jyr.2">
    <molecule id="Q5NBU8-1"/>
    <property type="organism name" value="mouse"/>
</dbReference>
<dbReference type="UCSC" id="uc056ymf.1">
    <molecule id="Q5NBU8-3"/>
    <property type="organism name" value="mouse"/>
</dbReference>
<dbReference type="AGR" id="MGI:3772572"/>
<dbReference type="CTD" id="54739"/>
<dbReference type="MGI" id="MGI:3772572">
    <property type="gene designation" value="Xaf1"/>
</dbReference>
<dbReference type="VEuPathDB" id="HostDB:ENSMUSG00000040483"/>
<dbReference type="eggNOG" id="ENOG502QQRU">
    <property type="taxonomic scope" value="Eukaryota"/>
</dbReference>
<dbReference type="GeneTree" id="ENSGT00530000063869"/>
<dbReference type="HOGENOM" id="CLU_066148_0_0_1"/>
<dbReference type="InParanoid" id="Q5NBU8"/>
<dbReference type="OMA" id="MDHEADE"/>
<dbReference type="OrthoDB" id="422728at2759"/>
<dbReference type="PhylomeDB" id="Q5NBU8"/>
<dbReference type="TreeFam" id="TF331416"/>
<dbReference type="BioGRID-ORCS" id="327959">
    <property type="hits" value="1 hit in 77 CRISPR screens"/>
</dbReference>
<dbReference type="PRO" id="PR:Q5NBU8"/>
<dbReference type="Proteomes" id="UP000000589">
    <property type="component" value="Chromosome 11"/>
</dbReference>
<dbReference type="RNAct" id="Q5NBU8">
    <property type="molecule type" value="protein"/>
</dbReference>
<dbReference type="Bgee" id="ENSMUSG00000040483">
    <property type="expression patterns" value="Expressed in small intestine Peyer's patch and 164 other cell types or tissues"/>
</dbReference>
<dbReference type="ExpressionAtlas" id="Q5NBU8">
    <property type="expression patterns" value="baseline and differential"/>
</dbReference>
<dbReference type="GO" id="GO:0005739">
    <property type="term" value="C:mitochondrion"/>
    <property type="evidence" value="ECO:0007669"/>
    <property type="project" value="UniProtKB-SubCell"/>
</dbReference>
<dbReference type="GO" id="GO:0005634">
    <property type="term" value="C:nucleus"/>
    <property type="evidence" value="ECO:0007669"/>
    <property type="project" value="UniProtKB-SubCell"/>
</dbReference>
<dbReference type="GO" id="GO:0008270">
    <property type="term" value="F:zinc ion binding"/>
    <property type="evidence" value="ECO:0007669"/>
    <property type="project" value="UniProtKB-KW"/>
</dbReference>
<dbReference type="GO" id="GO:0006915">
    <property type="term" value="P:apoptotic process"/>
    <property type="evidence" value="ECO:0007669"/>
    <property type="project" value="UniProtKB-KW"/>
</dbReference>
<dbReference type="FunFam" id="3.30.40.10:FF:000378">
    <property type="entry name" value="TRAF-type zinc finger domain-containing 1"/>
    <property type="match status" value="1"/>
</dbReference>
<dbReference type="Gene3D" id="6.10.250.1730">
    <property type="match status" value="1"/>
</dbReference>
<dbReference type="Gene3D" id="3.30.40.10">
    <property type="entry name" value="Zinc/RING finger domain, C3HC4 (zinc finger)"/>
    <property type="match status" value="2"/>
</dbReference>
<dbReference type="InterPro" id="IPR051986">
    <property type="entry name" value="Innate_Immune_Apopt_Reg"/>
</dbReference>
<dbReference type="InterPro" id="IPR049439">
    <property type="entry name" value="TRAFD1-XIAF1_Znf"/>
</dbReference>
<dbReference type="InterPro" id="IPR041386">
    <property type="entry name" value="XAF1_C"/>
</dbReference>
<dbReference type="InterPro" id="IPR031220">
    <property type="entry name" value="XAF1_C_sf"/>
</dbReference>
<dbReference type="InterPro" id="IPR013083">
    <property type="entry name" value="Znf_RING/FYVE/PHD"/>
</dbReference>
<dbReference type="PANTHER" id="PTHR16295">
    <property type="entry name" value="TRAF-TYPE ZINC FINGER PROTEIN-RELATED"/>
    <property type="match status" value="1"/>
</dbReference>
<dbReference type="PANTHER" id="PTHR16295:SF17">
    <property type="entry name" value="XIAP-ASSOCIATED FACTOR 1"/>
    <property type="match status" value="1"/>
</dbReference>
<dbReference type="Pfam" id="PF21366">
    <property type="entry name" value="TRAFD1-XIAF1_ZnF"/>
    <property type="match status" value="1"/>
</dbReference>
<dbReference type="Pfam" id="PF18608">
    <property type="entry name" value="XAF1_C"/>
    <property type="match status" value="1"/>
</dbReference>
<dbReference type="Pfam" id="PF23580">
    <property type="entry name" value="Znf_XAF1_N"/>
    <property type="match status" value="1"/>
</dbReference>
<accession>Q5NBU8</accession>
<accession>B7ZD14</accession>
<accession>Q3USK3</accession>
<accession>Q5NBU6</accession>
<accession>Q5NBU7</accession>
<accession>Q5NBU9</accession>
<reference key="1">
    <citation type="journal article" date="2009" name="PLoS Biol.">
        <title>Lineage-specific biology revealed by a finished genome assembly of the mouse.</title>
        <authorList>
            <person name="Church D.M."/>
            <person name="Goodstadt L."/>
            <person name="Hillier L.W."/>
            <person name="Zody M.C."/>
            <person name="Goldstein S."/>
            <person name="She X."/>
            <person name="Bult C.J."/>
            <person name="Agarwala R."/>
            <person name="Cherry J.L."/>
            <person name="DiCuccio M."/>
            <person name="Hlavina W."/>
            <person name="Kapustin Y."/>
            <person name="Meric P."/>
            <person name="Maglott D."/>
            <person name="Birtle Z."/>
            <person name="Marques A.C."/>
            <person name="Graves T."/>
            <person name="Zhou S."/>
            <person name="Teague B."/>
            <person name="Potamousis K."/>
            <person name="Churas C."/>
            <person name="Place M."/>
            <person name="Herschleb J."/>
            <person name="Runnheim R."/>
            <person name="Forrest D."/>
            <person name="Amos-Landgraf J."/>
            <person name="Schwartz D.C."/>
            <person name="Cheng Z."/>
            <person name="Lindblad-Toh K."/>
            <person name="Eichler E.E."/>
            <person name="Ponting C.P."/>
        </authorList>
    </citation>
    <scope>NUCLEOTIDE SEQUENCE [LARGE SCALE GENOMIC DNA]</scope>
    <source>
        <strain>C57BL/6J</strain>
    </source>
</reference>
<reference key="2">
    <citation type="journal article" date="2005" name="Science">
        <title>The transcriptional landscape of the mammalian genome.</title>
        <authorList>
            <person name="Carninci P."/>
            <person name="Kasukawa T."/>
            <person name="Katayama S."/>
            <person name="Gough J."/>
            <person name="Frith M.C."/>
            <person name="Maeda N."/>
            <person name="Oyama R."/>
            <person name="Ravasi T."/>
            <person name="Lenhard B."/>
            <person name="Wells C."/>
            <person name="Kodzius R."/>
            <person name="Shimokawa K."/>
            <person name="Bajic V.B."/>
            <person name="Brenner S.E."/>
            <person name="Batalov S."/>
            <person name="Forrest A.R."/>
            <person name="Zavolan M."/>
            <person name="Davis M.J."/>
            <person name="Wilming L.G."/>
            <person name="Aidinis V."/>
            <person name="Allen J.E."/>
            <person name="Ambesi-Impiombato A."/>
            <person name="Apweiler R."/>
            <person name="Aturaliya R.N."/>
            <person name="Bailey T.L."/>
            <person name="Bansal M."/>
            <person name="Baxter L."/>
            <person name="Beisel K.W."/>
            <person name="Bersano T."/>
            <person name="Bono H."/>
            <person name="Chalk A.M."/>
            <person name="Chiu K.P."/>
            <person name="Choudhary V."/>
            <person name="Christoffels A."/>
            <person name="Clutterbuck D.R."/>
            <person name="Crowe M.L."/>
            <person name="Dalla E."/>
            <person name="Dalrymple B.P."/>
            <person name="de Bono B."/>
            <person name="Della Gatta G."/>
            <person name="di Bernardo D."/>
            <person name="Down T."/>
            <person name="Engstrom P."/>
            <person name="Fagiolini M."/>
            <person name="Faulkner G."/>
            <person name="Fletcher C.F."/>
            <person name="Fukushima T."/>
            <person name="Furuno M."/>
            <person name="Futaki S."/>
            <person name="Gariboldi M."/>
            <person name="Georgii-Hemming P."/>
            <person name="Gingeras T.R."/>
            <person name="Gojobori T."/>
            <person name="Green R.E."/>
            <person name="Gustincich S."/>
            <person name="Harbers M."/>
            <person name="Hayashi Y."/>
            <person name="Hensch T.K."/>
            <person name="Hirokawa N."/>
            <person name="Hill D."/>
            <person name="Huminiecki L."/>
            <person name="Iacono M."/>
            <person name="Ikeo K."/>
            <person name="Iwama A."/>
            <person name="Ishikawa T."/>
            <person name="Jakt M."/>
            <person name="Kanapin A."/>
            <person name="Katoh M."/>
            <person name="Kawasawa Y."/>
            <person name="Kelso J."/>
            <person name="Kitamura H."/>
            <person name="Kitano H."/>
            <person name="Kollias G."/>
            <person name="Krishnan S.P."/>
            <person name="Kruger A."/>
            <person name="Kummerfeld S.K."/>
            <person name="Kurochkin I.V."/>
            <person name="Lareau L.F."/>
            <person name="Lazarevic D."/>
            <person name="Lipovich L."/>
            <person name="Liu J."/>
            <person name="Liuni S."/>
            <person name="McWilliam S."/>
            <person name="Madan Babu M."/>
            <person name="Madera M."/>
            <person name="Marchionni L."/>
            <person name="Matsuda H."/>
            <person name="Matsuzawa S."/>
            <person name="Miki H."/>
            <person name="Mignone F."/>
            <person name="Miyake S."/>
            <person name="Morris K."/>
            <person name="Mottagui-Tabar S."/>
            <person name="Mulder N."/>
            <person name="Nakano N."/>
            <person name="Nakauchi H."/>
            <person name="Ng P."/>
            <person name="Nilsson R."/>
            <person name="Nishiguchi S."/>
            <person name="Nishikawa S."/>
            <person name="Nori F."/>
            <person name="Ohara O."/>
            <person name="Okazaki Y."/>
            <person name="Orlando V."/>
            <person name="Pang K.C."/>
            <person name="Pavan W.J."/>
            <person name="Pavesi G."/>
            <person name="Pesole G."/>
            <person name="Petrovsky N."/>
            <person name="Piazza S."/>
            <person name="Reed J."/>
            <person name="Reid J.F."/>
            <person name="Ring B.Z."/>
            <person name="Ringwald M."/>
            <person name="Rost B."/>
            <person name="Ruan Y."/>
            <person name="Salzberg S.L."/>
            <person name="Sandelin A."/>
            <person name="Schneider C."/>
            <person name="Schoenbach C."/>
            <person name="Sekiguchi K."/>
            <person name="Semple C.A."/>
            <person name="Seno S."/>
            <person name="Sessa L."/>
            <person name="Sheng Y."/>
            <person name="Shibata Y."/>
            <person name="Shimada H."/>
            <person name="Shimada K."/>
            <person name="Silva D."/>
            <person name="Sinclair B."/>
            <person name="Sperling S."/>
            <person name="Stupka E."/>
            <person name="Sugiura K."/>
            <person name="Sultana R."/>
            <person name="Takenaka Y."/>
            <person name="Taki K."/>
            <person name="Tammoja K."/>
            <person name="Tan S.L."/>
            <person name="Tang S."/>
            <person name="Taylor M.S."/>
            <person name="Tegner J."/>
            <person name="Teichmann S.A."/>
            <person name="Ueda H.R."/>
            <person name="van Nimwegen E."/>
            <person name="Verardo R."/>
            <person name="Wei C.L."/>
            <person name="Yagi K."/>
            <person name="Yamanishi H."/>
            <person name="Zabarovsky E."/>
            <person name="Zhu S."/>
            <person name="Zimmer A."/>
            <person name="Hide W."/>
            <person name="Bult C."/>
            <person name="Grimmond S.M."/>
            <person name="Teasdale R.D."/>
            <person name="Liu E.T."/>
            <person name="Brusic V."/>
            <person name="Quackenbush J."/>
            <person name="Wahlestedt C."/>
            <person name="Mattick J.S."/>
            <person name="Hume D.A."/>
            <person name="Kai C."/>
            <person name="Sasaki D."/>
            <person name="Tomaru Y."/>
            <person name="Fukuda S."/>
            <person name="Kanamori-Katayama M."/>
            <person name="Suzuki M."/>
            <person name="Aoki J."/>
            <person name="Arakawa T."/>
            <person name="Iida J."/>
            <person name="Imamura K."/>
            <person name="Itoh M."/>
            <person name="Kato T."/>
            <person name="Kawaji H."/>
            <person name="Kawagashira N."/>
            <person name="Kawashima T."/>
            <person name="Kojima M."/>
            <person name="Kondo S."/>
            <person name="Konno H."/>
            <person name="Nakano K."/>
            <person name="Ninomiya N."/>
            <person name="Nishio T."/>
            <person name="Okada M."/>
            <person name="Plessy C."/>
            <person name="Shibata K."/>
            <person name="Shiraki T."/>
            <person name="Suzuki S."/>
            <person name="Tagami M."/>
            <person name="Waki K."/>
            <person name="Watahiki A."/>
            <person name="Okamura-Oho Y."/>
            <person name="Suzuki H."/>
            <person name="Kawai J."/>
            <person name="Hayashizaki Y."/>
        </authorList>
    </citation>
    <scope>NUCLEOTIDE SEQUENCE [LARGE SCALE MRNA] OF 1-205 (ISOFORM 1)</scope>
    <source>
        <strain>C57BL/6J</strain>
        <tissue>Adipose tissue</tissue>
    </source>
</reference>
<reference key="3">
    <citation type="journal article" date="2010" name="Cell">
        <title>A tissue-specific atlas of mouse protein phosphorylation and expression.</title>
        <authorList>
            <person name="Huttlin E.L."/>
            <person name="Jedrychowski M.P."/>
            <person name="Elias J.E."/>
            <person name="Goswami T."/>
            <person name="Rad R."/>
            <person name="Beausoleil S.A."/>
            <person name="Villen J."/>
            <person name="Haas W."/>
            <person name="Sowa M.E."/>
            <person name="Gygi S.P."/>
        </authorList>
    </citation>
    <scope>IDENTIFICATION BY MASS SPECTROMETRY [LARGE SCALE ANALYSIS]</scope>
    <source>
        <tissue>Spleen</tissue>
    </source>
</reference>
<protein>
    <recommendedName>
        <fullName>XIAP-associated factor 1</fullName>
    </recommendedName>
    <alternativeName>
        <fullName>BIRC4-binding protein</fullName>
    </alternativeName>
</protein>
<proteinExistence type="evidence at protein level"/>
<sequence>MEADFQVCRNCKRNVASLHFMLHEAHCLRFIVLCPECEEPIPESKMKEHMEVVHQQTKESQQHPAKCKFCELAVQLSNLDVHESHCGSRTEHCPHCNQPITLQVLSQHKAMCLSAKGRPEEGKRIVSSPGRKTRCDLCKQMIPENTYASHMKQCSAPNTVTRIRDESIIVIPSTLAFMDSGNRRSTVSKDVRPKTKNRNSSTKRETKKQNGTVALPLKSGLQQRADLPTGDETAYDTLQNCCQCRILLPLPILNEHQEKCQRLAHQKKLQWGW</sequence>
<organism>
    <name type="scientific">Mus musculus</name>
    <name type="common">Mouse</name>
    <dbReference type="NCBI Taxonomy" id="10090"/>
    <lineage>
        <taxon>Eukaryota</taxon>
        <taxon>Metazoa</taxon>
        <taxon>Chordata</taxon>
        <taxon>Craniata</taxon>
        <taxon>Vertebrata</taxon>
        <taxon>Euteleostomi</taxon>
        <taxon>Mammalia</taxon>
        <taxon>Eutheria</taxon>
        <taxon>Euarchontoglires</taxon>
        <taxon>Glires</taxon>
        <taxon>Rodentia</taxon>
        <taxon>Myomorpha</taxon>
        <taxon>Muroidea</taxon>
        <taxon>Muridae</taxon>
        <taxon>Murinae</taxon>
        <taxon>Mus</taxon>
        <taxon>Mus</taxon>
    </lineage>
</organism>
<comment type="function">
    <text evidence="1">Seems to function as a negative regulator of members of the IAP (inhibitor of apoptosis protein) family. Inhibits anti-caspase activity of BIRC4. Induces cleavage and inactivation of BIRC4 independent of caspase activation. Mediates TNF-alpha-induced apoptosis and is involved in apoptosis in trophoblast cells. May inhibit BIRC4 indirectly by activating the mitochondrial apoptosis pathway. After translocation to mitochondria, promotes translocation of BAX to mitochondria and cytochrome c release from mitochondria. Seems to promote the redistribution of BIRC4 from the cytoplasm to the nucleus, probably independent of BIRC4 inactivation which seems to occur in the cytoplasm. The BIRC4-XAF1 complex mediates down-regulation of BIRC5/survivin; the process requires the E3 ligase activity of BIRC4. Seems to be involved in cellular sensitivity to the proapoptotic actions of TRAIL. May be a tumor suppressor by mediating apoptosis resistance of cancer cells (By similarity).</text>
</comment>
<comment type="subunit">
    <text evidence="1">Interacts with BIRC1, BIRC2, BIRC3, BIRC4, BIRC7 and BIRC8. Part of an complex consisting of BIRC4, XAF1 and BIRC5; the complex formation requires IFN-beta stimulation. Interacts with RNF114, the interaction increases XAF1 stability and proapoptotic effects, and may regulate IFN signaling (By similarity).</text>
</comment>
<comment type="subcellular location">
    <subcellularLocation>
        <location evidence="1">Cytoplasm</location>
    </subcellularLocation>
    <subcellularLocation>
        <location evidence="1">Nucleus</location>
    </subcellularLocation>
    <subcellularLocation>
        <location evidence="1">Mitochondrion</location>
    </subcellularLocation>
</comment>
<comment type="alternative products">
    <event type="alternative splicing"/>
    <isoform>
        <id>Q5NBU8-1</id>
        <name>1</name>
        <sequence type="displayed"/>
    </isoform>
    <isoform>
        <id>Q5NBU8-3</id>
        <name>2</name>
        <sequence type="described" ref="VSP_039715"/>
    </isoform>
</comment>
<comment type="sequence caution" evidence="3">
    <conflict type="miscellaneous discrepancy">
        <sequence resource="EMBL-CDS" id="BAE24328"/>
    </conflict>
    <text>Probable cloning artifact.</text>
</comment>
<comment type="sequence caution" evidence="3">
    <conflict type="erroneous gene model prediction">
        <sequence resource="EMBL-CDS" id="CAI36034"/>
    </conflict>
</comment>
<name>XAF1_MOUSE</name>
<gene>
    <name type="primary">Xaf1</name>
    <name type="synonym">Birc4bp</name>
    <name type="synonym">Xiapaf1</name>
</gene>
<keyword id="KW-0025">Alternative splicing</keyword>
<keyword id="KW-0053">Apoptosis</keyword>
<keyword id="KW-0963">Cytoplasm</keyword>
<keyword id="KW-0479">Metal-binding</keyword>
<keyword id="KW-0496">Mitochondrion</keyword>
<keyword id="KW-0539">Nucleus</keyword>
<keyword id="KW-1185">Reference proteome</keyword>
<keyword id="KW-0043">Tumor suppressor</keyword>
<keyword id="KW-0862">Zinc</keyword>
<keyword id="KW-0863">Zinc-finger</keyword>